<reference key="1">
    <citation type="journal article" date="2004" name="Nature">
        <title>Genome evolution in yeasts.</title>
        <authorList>
            <person name="Dujon B."/>
            <person name="Sherman D."/>
            <person name="Fischer G."/>
            <person name="Durrens P."/>
            <person name="Casaregola S."/>
            <person name="Lafontaine I."/>
            <person name="de Montigny J."/>
            <person name="Marck C."/>
            <person name="Neuveglise C."/>
            <person name="Talla E."/>
            <person name="Goffard N."/>
            <person name="Frangeul L."/>
            <person name="Aigle M."/>
            <person name="Anthouard V."/>
            <person name="Babour A."/>
            <person name="Barbe V."/>
            <person name="Barnay S."/>
            <person name="Blanchin S."/>
            <person name="Beckerich J.-M."/>
            <person name="Beyne E."/>
            <person name="Bleykasten C."/>
            <person name="Boisrame A."/>
            <person name="Boyer J."/>
            <person name="Cattolico L."/>
            <person name="Confanioleri F."/>
            <person name="de Daruvar A."/>
            <person name="Despons L."/>
            <person name="Fabre E."/>
            <person name="Fairhead C."/>
            <person name="Ferry-Dumazet H."/>
            <person name="Groppi A."/>
            <person name="Hantraye F."/>
            <person name="Hennequin C."/>
            <person name="Jauniaux N."/>
            <person name="Joyet P."/>
            <person name="Kachouri R."/>
            <person name="Kerrest A."/>
            <person name="Koszul R."/>
            <person name="Lemaire M."/>
            <person name="Lesur I."/>
            <person name="Ma L."/>
            <person name="Muller H."/>
            <person name="Nicaud J.-M."/>
            <person name="Nikolski M."/>
            <person name="Oztas S."/>
            <person name="Ozier-Kalogeropoulos O."/>
            <person name="Pellenz S."/>
            <person name="Potier S."/>
            <person name="Richard G.-F."/>
            <person name="Straub M.-L."/>
            <person name="Suleau A."/>
            <person name="Swennen D."/>
            <person name="Tekaia F."/>
            <person name="Wesolowski-Louvel M."/>
            <person name="Westhof E."/>
            <person name="Wirth B."/>
            <person name="Zeniou-Meyer M."/>
            <person name="Zivanovic Y."/>
            <person name="Bolotin-Fukuhara M."/>
            <person name="Thierry A."/>
            <person name="Bouchier C."/>
            <person name="Caudron B."/>
            <person name="Scarpelli C."/>
            <person name="Gaillardin C."/>
            <person name="Weissenbach J."/>
            <person name="Wincker P."/>
            <person name="Souciet J.-L."/>
        </authorList>
    </citation>
    <scope>NUCLEOTIDE SEQUENCE [LARGE SCALE GENOMIC DNA]</scope>
    <source>
        <strain>ATCC 2001 / BCRC 20586 / JCM 3761 / NBRC 0622 / NRRL Y-65 / CBS 138</strain>
    </source>
</reference>
<dbReference type="EC" id="2.3.1.35" evidence="1"/>
<dbReference type="EC" id="2.3.1.1" evidence="1"/>
<dbReference type="EMBL" id="CR380952">
    <property type="protein sequence ID" value="CAG59174.1"/>
    <property type="molecule type" value="Genomic_DNA"/>
</dbReference>
<dbReference type="RefSeq" id="XP_446250.1">
    <property type="nucleotide sequence ID" value="XM_446250.1"/>
</dbReference>
<dbReference type="SMR" id="Q6FU44"/>
<dbReference type="FunCoup" id="Q6FU44">
    <property type="interactions" value="322"/>
</dbReference>
<dbReference type="STRING" id="284593.Q6FU44"/>
<dbReference type="MEROPS" id="T05.001"/>
<dbReference type="KEGG" id="cgr:2887807"/>
<dbReference type="eggNOG" id="KOG2786">
    <property type="taxonomic scope" value="Eukaryota"/>
</dbReference>
<dbReference type="HOGENOM" id="CLU_027172_1_0_1"/>
<dbReference type="InParanoid" id="Q6FU44"/>
<dbReference type="OMA" id="WGRIVMA"/>
<dbReference type="UniPathway" id="UPA00068">
    <property type="reaction ID" value="UER00106"/>
</dbReference>
<dbReference type="UniPathway" id="UPA00068">
    <property type="reaction ID" value="UER00111"/>
</dbReference>
<dbReference type="Proteomes" id="UP000002428">
    <property type="component" value="Chromosome F"/>
</dbReference>
<dbReference type="GO" id="GO:0005759">
    <property type="term" value="C:mitochondrial matrix"/>
    <property type="evidence" value="ECO:0007669"/>
    <property type="project" value="UniProtKB-SubCell"/>
</dbReference>
<dbReference type="GO" id="GO:0004358">
    <property type="term" value="F:glutamate N-acetyltransferase activity"/>
    <property type="evidence" value="ECO:0007669"/>
    <property type="project" value="UniProtKB-UniRule"/>
</dbReference>
<dbReference type="GO" id="GO:0004042">
    <property type="term" value="F:L-glutamate N-acetyltransferase activity"/>
    <property type="evidence" value="ECO:0007669"/>
    <property type="project" value="UniProtKB-UniRule"/>
</dbReference>
<dbReference type="GO" id="GO:0006526">
    <property type="term" value="P:L-arginine biosynthetic process"/>
    <property type="evidence" value="ECO:0007669"/>
    <property type="project" value="UniProtKB-UniRule"/>
</dbReference>
<dbReference type="GO" id="GO:0006592">
    <property type="term" value="P:ornithine biosynthetic process"/>
    <property type="evidence" value="ECO:0007669"/>
    <property type="project" value="TreeGrafter"/>
</dbReference>
<dbReference type="CDD" id="cd02152">
    <property type="entry name" value="OAT"/>
    <property type="match status" value="1"/>
</dbReference>
<dbReference type="FunFam" id="3.60.70.12:FF:000001">
    <property type="entry name" value="Arginine biosynthesis bifunctional protein ArgJ, chloroplastic"/>
    <property type="match status" value="1"/>
</dbReference>
<dbReference type="FunFam" id="3.10.20.340:FF:000002">
    <property type="entry name" value="Arginine biosynthesis bifunctional protein ArgJ, mitochondrial"/>
    <property type="match status" value="1"/>
</dbReference>
<dbReference type="FunFam" id="3.30.2330.10:FF:000001">
    <property type="entry name" value="Arginine biosynthesis bifunctional protein ArgJ, mitochondrial"/>
    <property type="match status" value="1"/>
</dbReference>
<dbReference type="Gene3D" id="3.30.2330.10">
    <property type="entry name" value="arginine biosynthesis bifunctional protein suprefamily"/>
    <property type="match status" value="1"/>
</dbReference>
<dbReference type="Gene3D" id="3.10.20.340">
    <property type="entry name" value="ArgJ beta chain, C-terminal domain"/>
    <property type="match status" value="1"/>
</dbReference>
<dbReference type="Gene3D" id="3.60.70.12">
    <property type="entry name" value="L-amino peptidase D-ALA esterase/amidase"/>
    <property type="match status" value="1"/>
</dbReference>
<dbReference type="HAMAP" id="MF_01106">
    <property type="entry name" value="ArgJ"/>
    <property type="match status" value="1"/>
</dbReference>
<dbReference type="InterPro" id="IPR002813">
    <property type="entry name" value="Arg_biosynth_ArgJ"/>
</dbReference>
<dbReference type="InterPro" id="IPR016117">
    <property type="entry name" value="ArgJ-like_dom_sf"/>
</dbReference>
<dbReference type="InterPro" id="IPR042195">
    <property type="entry name" value="ArgJ_beta_C"/>
</dbReference>
<dbReference type="NCBIfam" id="TIGR00120">
    <property type="entry name" value="ArgJ"/>
    <property type="match status" value="1"/>
</dbReference>
<dbReference type="NCBIfam" id="NF003802">
    <property type="entry name" value="PRK05388.1"/>
    <property type="match status" value="1"/>
</dbReference>
<dbReference type="PANTHER" id="PTHR23100">
    <property type="entry name" value="ARGININE BIOSYNTHESIS BIFUNCTIONAL PROTEIN ARGJ"/>
    <property type="match status" value="1"/>
</dbReference>
<dbReference type="PANTHER" id="PTHR23100:SF0">
    <property type="entry name" value="ARGININE BIOSYNTHESIS BIFUNCTIONAL PROTEIN ARGJ, MITOCHONDRIAL"/>
    <property type="match status" value="1"/>
</dbReference>
<dbReference type="Pfam" id="PF01960">
    <property type="entry name" value="ArgJ"/>
    <property type="match status" value="1"/>
</dbReference>
<dbReference type="SUPFAM" id="SSF56266">
    <property type="entry name" value="DmpA/ArgJ-like"/>
    <property type="match status" value="1"/>
</dbReference>
<accession>Q6FU44</accession>
<keyword id="KW-0012">Acyltransferase</keyword>
<keyword id="KW-0028">Amino-acid biosynthesis</keyword>
<keyword id="KW-0055">Arginine biosynthesis</keyword>
<keyword id="KW-0068">Autocatalytic cleavage</keyword>
<keyword id="KW-0496">Mitochondrion</keyword>
<keyword id="KW-0511">Multifunctional enzyme</keyword>
<keyword id="KW-1185">Reference proteome</keyword>
<keyword id="KW-0808">Transferase</keyword>
<gene>
    <name type="ordered locus">CAGL0F06501g</name>
</gene>
<comment type="function">
    <text evidence="1">Catalyzes two activities which are involved in the cyclic version of arginine biosynthesis: the synthesis of acetylglutamate from glutamate and acetyl-CoA, and of ornithine by transacetylation between acetylornithine and glutamate.</text>
</comment>
<comment type="catalytic activity">
    <reaction evidence="1">
        <text>N(2)-acetyl-L-ornithine + L-glutamate = N-acetyl-L-glutamate + L-ornithine</text>
        <dbReference type="Rhea" id="RHEA:15349"/>
        <dbReference type="ChEBI" id="CHEBI:29985"/>
        <dbReference type="ChEBI" id="CHEBI:44337"/>
        <dbReference type="ChEBI" id="CHEBI:46911"/>
        <dbReference type="ChEBI" id="CHEBI:57805"/>
        <dbReference type="EC" id="2.3.1.35"/>
    </reaction>
</comment>
<comment type="catalytic activity">
    <reaction evidence="1">
        <text>L-glutamate + acetyl-CoA = N-acetyl-L-glutamate + CoA + H(+)</text>
        <dbReference type="Rhea" id="RHEA:24292"/>
        <dbReference type="ChEBI" id="CHEBI:15378"/>
        <dbReference type="ChEBI" id="CHEBI:29985"/>
        <dbReference type="ChEBI" id="CHEBI:44337"/>
        <dbReference type="ChEBI" id="CHEBI:57287"/>
        <dbReference type="ChEBI" id="CHEBI:57288"/>
        <dbReference type="EC" id="2.3.1.1"/>
    </reaction>
</comment>
<comment type="pathway">
    <text evidence="1">Amino-acid biosynthesis; L-arginine biosynthesis; L-ornithine and N-acetyl-L-glutamate from L-glutamate and N(2)-acetyl-L-ornithine (cyclic): step 1/1.</text>
</comment>
<comment type="pathway">
    <text evidence="1">Amino-acid biosynthesis; L-arginine biosynthesis; N(2)-acetyl-L-ornithine from L-glutamate: step 1/4.</text>
</comment>
<comment type="subunit">
    <text evidence="1">Heterodimer of an alpha and a beta chain.</text>
</comment>
<comment type="subcellular location">
    <subcellularLocation>
        <location evidence="1">Mitochondrion matrix</location>
    </subcellularLocation>
</comment>
<comment type="PTM">
    <text evidence="1">The alpha and beta chains are autoproteolytically processed from a single precursor protein within the mitochondrion.</text>
</comment>
<comment type="miscellaneous">
    <text evidence="1">This protein may be expected to contain an N-terminal transit peptide but none has been predicted.</text>
</comment>
<comment type="similarity">
    <text evidence="1">Belongs to the ArgJ family.</text>
</comment>
<feature type="chain" id="PRO_0000398036" description="Arginine biosynthesis bifunctional protein ArgJ alpha chain" evidence="1">
    <location>
        <begin position="1"/>
        <end position="214"/>
    </location>
</feature>
<feature type="chain" id="PRO_0000398037" description="Arginine biosynthesis bifunctional protein ArgJ beta chain" evidence="1">
    <location>
        <begin position="215"/>
        <end position="441"/>
    </location>
</feature>
<feature type="active site" description="Nucleophile" evidence="1">
    <location>
        <position position="215"/>
    </location>
</feature>
<feature type="binding site" evidence="1">
    <location>
        <position position="177"/>
    </location>
    <ligand>
        <name>substrate</name>
    </ligand>
</feature>
<feature type="binding site" evidence="1">
    <location>
        <position position="204"/>
    </location>
    <ligand>
        <name>substrate</name>
    </ligand>
</feature>
<feature type="binding site" evidence="1">
    <location>
        <position position="215"/>
    </location>
    <ligand>
        <name>substrate</name>
    </ligand>
</feature>
<feature type="binding site" evidence="1">
    <location>
        <position position="301"/>
    </location>
    <ligand>
        <name>substrate</name>
    </ligand>
</feature>
<feature type="binding site" evidence="1">
    <location>
        <position position="436"/>
    </location>
    <ligand>
        <name>substrate</name>
    </ligand>
</feature>
<feature type="binding site" evidence="1">
    <location>
        <position position="441"/>
    </location>
    <ligand>
        <name>substrate</name>
    </ligand>
</feature>
<feature type="site" description="Involved in the stabilization of negative charge on the oxyanion by the formation of the oxyanion hole" evidence="1">
    <location>
        <position position="136"/>
    </location>
</feature>
<feature type="site" description="Involved in the stabilization of negative charge on the oxyanion by the formation of the oxyanion hole" evidence="1">
    <location>
        <position position="137"/>
    </location>
</feature>
<feature type="site" description="Cleavage; by autolysis" evidence="1">
    <location>
        <begin position="214"/>
        <end position="215"/>
    </location>
</feature>
<protein>
    <recommendedName>
        <fullName evidence="1">Arginine biosynthesis bifunctional protein ArgJ, mitochondrial</fullName>
    </recommendedName>
    <domain>
        <recommendedName>
            <fullName evidence="1">Glutamate N-acetyltransferase</fullName>
            <shortName evidence="1">GAT</shortName>
            <ecNumber evidence="1">2.3.1.35</ecNumber>
        </recommendedName>
        <alternativeName>
            <fullName evidence="1">Ornithine acetyltransferase</fullName>
            <shortName evidence="1">OATase</shortName>
        </alternativeName>
        <alternativeName>
            <fullName evidence="1">Ornithine transacetylase</fullName>
        </alternativeName>
    </domain>
    <domain>
        <recommendedName>
            <fullName evidence="1">Amino-acid acetyltransferase</fullName>
            <ecNumber evidence="1">2.3.1.1</ecNumber>
        </recommendedName>
        <alternativeName>
            <fullName evidence="1">N-acetylglutamate synthase</fullName>
            <shortName evidence="1">AGS</shortName>
        </alternativeName>
    </domain>
    <component>
        <recommendedName>
            <fullName evidence="1">Arginine biosynthesis bifunctional protein ArgJ alpha chain</fullName>
        </recommendedName>
    </component>
    <component>
        <recommendedName>
            <fullName evidence="1">Arginine biosynthesis bifunctional protein ArgJ beta chain</fullName>
        </recommendedName>
    </component>
</protein>
<name>ARGJ_CANGA</name>
<organism>
    <name type="scientific">Candida glabrata (strain ATCC 2001 / BCRC 20586 / JCM 3761 / NBRC 0622 / NRRL Y-65 / CBS 138)</name>
    <name type="common">Yeast</name>
    <name type="synonym">Nakaseomyces glabratus</name>
    <dbReference type="NCBI Taxonomy" id="284593"/>
    <lineage>
        <taxon>Eukaryota</taxon>
        <taxon>Fungi</taxon>
        <taxon>Dikarya</taxon>
        <taxon>Ascomycota</taxon>
        <taxon>Saccharomycotina</taxon>
        <taxon>Saccharomycetes</taxon>
        <taxon>Saccharomycetales</taxon>
        <taxon>Saccharomycetaceae</taxon>
        <taxon>Nakaseomyces</taxon>
    </lineage>
</organism>
<evidence type="ECO:0000255" key="1">
    <source>
        <dbReference type="HAMAP-Rule" id="MF_03124"/>
    </source>
</evidence>
<sequence>MKISKTLLQHGRKVIDKYNLYVPTEGVFPKGYKVGSIASGVKKNGNLDLGVLVNTNTSRPSSAAAVFTTNKFKAAPVLTSKKVLESTQGNGINAIVVNSGCANAVTGELGMQDAQEMIDLVNRKIGKPNSTLVMSTGVIGQRLQMDKISAGIKNIFDNNALGNDFKSWLNIAKSINTTDTFPKLVSRQFELLNGQKYTLVGMAKGAGMICPNMATLLGYFVTDLPIASSALQKILRFATDRSFNCISVDGDMSTNDTICMIANGAVETDEITESSEEYEQVKSQVTEFAKTLAQLVVRDGEGSTKFVTVNVQNSLTFEDAKIIAESISNSMLVKTALYGQDANWGRILCAIGYAKLDNLKSLNTDSISVSFIATDNSEPRELKLVENGVPQLDVDEERAAQILALDDLEVLVDLKTGNESAQFWTCDLSHEYVTINGDYRS</sequence>
<proteinExistence type="inferred from homology"/>